<feature type="chain" id="PRO_1000166785" description="Large ribosomal subunit protein uL6">
    <location>
        <begin position="1"/>
        <end position="177"/>
    </location>
</feature>
<gene>
    <name evidence="1" type="primary">rplF</name>
    <name type="ordered locus">Arad_1992</name>
</gene>
<organism>
    <name type="scientific">Rhizobium rhizogenes (strain K84 / ATCC BAA-868)</name>
    <name type="common">Agrobacterium radiobacter</name>
    <dbReference type="NCBI Taxonomy" id="311403"/>
    <lineage>
        <taxon>Bacteria</taxon>
        <taxon>Pseudomonadati</taxon>
        <taxon>Pseudomonadota</taxon>
        <taxon>Alphaproteobacteria</taxon>
        <taxon>Hyphomicrobiales</taxon>
        <taxon>Rhizobiaceae</taxon>
        <taxon>Rhizobium/Agrobacterium group</taxon>
        <taxon>Rhizobium</taxon>
    </lineage>
</organism>
<proteinExistence type="inferred from homology"/>
<keyword id="KW-0687">Ribonucleoprotein</keyword>
<keyword id="KW-0689">Ribosomal protein</keyword>
<keyword id="KW-0694">RNA-binding</keyword>
<keyword id="KW-0699">rRNA-binding</keyword>
<comment type="function">
    <text evidence="1">This protein binds to the 23S rRNA, and is important in its secondary structure. It is located near the subunit interface in the base of the L7/L12 stalk, and near the tRNA binding site of the peptidyltransferase center.</text>
</comment>
<comment type="subunit">
    <text evidence="1">Part of the 50S ribosomal subunit.</text>
</comment>
<comment type="similarity">
    <text evidence="1">Belongs to the universal ribosomal protein uL6 family.</text>
</comment>
<evidence type="ECO:0000255" key="1">
    <source>
        <dbReference type="HAMAP-Rule" id="MF_01365"/>
    </source>
</evidence>
<evidence type="ECO:0000305" key="2"/>
<sequence length="177" mass="19244">MSRIGKKPVQVPAGITASVDGQKVTAKGPKGELFFVANDEIGLKLEDNAIVVTPLSNSKDARSKWGMSRTMIENILKGVKEGYERKLEINGVGYRAALQGKNLQLALGFSHDVVYEPPEGITIAVPKPTEIVVSGINKQQVGQVAAEIREYRGPEPYKGKGVKYAGERIVRKEGKKK</sequence>
<dbReference type="EMBL" id="CP000628">
    <property type="protein sequence ID" value="ACM26294.1"/>
    <property type="molecule type" value="Genomic_DNA"/>
</dbReference>
<dbReference type="RefSeq" id="WP_007690780.1">
    <property type="nucleotide sequence ID" value="NC_011985.1"/>
</dbReference>
<dbReference type="SMR" id="B9JDU3"/>
<dbReference type="STRING" id="311403.Arad_1992"/>
<dbReference type="GeneID" id="86848182"/>
<dbReference type="KEGG" id="ara:Arad_1992"/>
<dbReference type="eggNOG" id="COG0097">
    <property type="taxonomic scope" value="Bacteria"/>
</dbReference>
<dbReference type="HOGENOM" id="CLU_065464_1_2_5"/>
<dbReference type="Proteomes" id="UP000001600">
    <property type="component" value="Chromosome 1"/>
</dbReference>
<dbReference type="GO" id="GO:0022625">
    <property type="term" value="C:cytosolic large ribosomal subunit"/>
    <property type="evidence" value="ECO:0007669"/>
    <property type="project" value="TreeGrafter"/>
</dbReference>
<dbReference type="GO" id="GO:0019843">
    <property type="term" value="F:rRNA binding"/>
    <property type="evidence" value="ECO:0007669"/>
    <property type="project" value="UniProtKB-UniRule"/>
</dbReference>
<dbReference type="GO" id="GO:0003735">
    <property type="term" value="F:structural constituent of ribosome"/>
    <property type="evidence" value="ECO:0007669"/>
    <property type="project" value="InterPro"/>
</dbReference>
<dbReference type="GO" id="GO:0002181">
    <property type="term" value="P:cytoplasmic translation"/>
    <property type="evidence" value="ECO:0007669"/>
    <property type="project" value="TreeGrafter"/>
</dbReference>
<dbReference type="FunFam" id="3.90.930.12:FF:000001">
    <property type="entry name" value="50S ribosomal protein L6"/>
    <property type="match status" value="1"/>
</dbReference>
<dbReference type="Gene3D" id="3.90.930.12">
    <property type="entry name" value="Ribosomal protein L6, alpha-beta domain"/>
    <property type="match status" value="2"/>
</dbReference>
<dbReference type="HAMAP" id="MF_01365_B">
    <property type="entry name" value="Ribosomal_uL6_B"/>
    <property type="match status" value="1"/>
</dbReference>
<dbReference type="InterPro" id="IPR000702">
    <property type="entry name" value="Ribosomal_uL6-like"/>
</dbReference>
<dbReference type="InterPro" id="IPR036789">
    <property type="entry name" value="Ribosomal_uL6-like_a/b-dom_sf"/>
</dbReference>
<dbReference type="InterPro" id="IPR020040">
    <property type="entry name" value="Ribosomal_uL6_a/b-dom"/>
</dbReference>
<dbReference type="InterPro" id="IPR019906">
    <property type="entry name" value="Ribosomal_uL6_bac-type"/>
</dbReference>
<dbReference type="InterPro" id="IPR002358">
    <property type="entry name" value="Ribosomal_uL6_CS"/>
</dbReference>
<dbReference type="NCBIfam" id="TIGR03654">
    <property type="entry name" value="L6_bact"/>
    <property type="match status" value="1"/>
</dbReference>
<dbReference type="PANTHER" id="PTHR11655">
    <property type="entry name" value="60S/50S RIBOSOMAL PROTEIN L6/L9"/>
    <property type="match status" value="1"/>
</dbReference>
<dbReference type="PANTHER" id="PTHR11655:SF14">
    <property type="entry name" value="LARGE RIBOSOMAL SUBUNIT PROTEIN UL6M"/>
    <property type="match status" value="1"/>
</dbReference>
<dbReference type="Pfam" id="PF00347">
    <property type="entry name" value="Ribosomal_L6"/>
    <property type="match status" value="2"/>
</dbReference>
<dbReference type="PIRSF" id="PIRSF002162">
    <property type="entry name" value="Ribosomal_L6"/>
    <property type="match status" value="1"/>
</dbReference>
<dbReference type="PRINTS" id="PR00059">
    <property type="entry name" value="RIBOSOMALL6"/>
</dbReference>
<dbReference type="SUPFAM" id="SSF56053">
    <property type="entry name" value="Ribosomal protein L6"/>
    <property type="match status" value="2"/>
</dbReference>
<dbReference type="PROSITE" id="PS00525">
    <property type="entry name" value="RIBOSOMAL_L6_1"/>
    <property type="match status" value="1"/>
</dbReference>
<reference key="1">
    <citation type="journal article" date="2009" name="J. Bacteriol.">
        <title>Genome sequences of three Agrobacterium biovars help elucidate the evolution of multichromosome genomes in bacteria.</title>
        <authorList>
            <person name="Slater S.C."/>
            <person name="Goldman B.S."/>
            <person name="Goodner B."/>
            <person name="Setubal J.C."/>
            <person name="Farrand S.K."/>
            <person name="Nester E.W."/>
            <person name="Burr T.J."/>
            <person name="Banta L."/>
            <person name="Dickerman A.W."/>
            <person name="Paulsen I."/>
            <person name="Otten L."/>
            <person name="Suen G."/>
            <person name="Welch R."/>
            <person name="Almeida N.F."/>
            <person name="Arnold F."/>
            <person name="Burton O.T."/>
            <person name="Du Z."/>
            <person name="Ewing A."/>
            <person name="Godsy E."/>
            <person name="Heisel S."/>
            <person name="Houmiel K.L."/>
            <person name="Jhaveri J."/>
            <person name="Lu J."/>
            <person name="Miller N.M."/>
            <person name="Norton S."/>
            <person name="Chen Q."/>
            <person name="Phoolcharoen W."/>
            <person name="Ohlin V."/>
            <person name="Ondrusek D."/>
            <person name="Pride N."/>
            <person name="Stricklin S.L."/>
            <person name="Sun J."/>
            <person name="Wheeler C."/>
            <person name="Wilson L."/>
            <person name="Zhu H."/>
            <person name="Wood D.W."/>
        </authorList>
    </citation>
    <scope>NUCLEOTIDE SEQUENCE [LARGE SCALE GENOMIC DNA]</scope>
    <source>
        <strain>K84 / ATCC BAA-868</strain>
    </source>
</reference>
<name>RL6_RHIR8</name>
<accession>B9JDU3</accession>
<protein>
    <recommendedName>
        <fullName evidence="1">Large ribosomal subunit protein uL6</fullName>
    </recommendedName>
    <alternativeName>
        <fullName evidence="2">50S ribosomal protein L6</fullName>
    </alternativeName>
</protein>